<keyword id="KW-0004">4Fe-4S</keyword>
<keyword id="KW-0408">Iron</keyword>
<keyword id="KW-0411">Iron-sulfur</keyword>
<keyword id="KW-0456">Lyase</keyword>
<keyword id="KW-0479">Metal-binding</keyword>
<keyword id="KW-0949">S-adenosyl-L-methionine</keyword>
<keyword id="KW-0784">Thiamine biosynthesis</keyword>
<keyword id="KW-0862">Zinc</keyword>
<evidence type="ECO:0000255" key="1">
    <source>
        <dbReference type="HAMAP-Rule" id="MF_00089"/>
    </source>
</evidence>
<feature type="chain" id="PRO_0000152788" description="Phosphomethylpyrimidine synthase">
    <location>
        <begin position="1"/>
        <end position="637"/>
    </location>
</feature>
<feature type="binding site" evidence="1">
    <location>
        <position position="242"/>
    </location>
    <ligand>
        <name>substrate</name>
    </ligand>
</feature>
<feature type="binding site" evidence="1">
    <location>
        <position position="271"/>
    </location>
    <ligand>
        <name>substrate</name>
    </ligand>
</feature>
<feature type="binding site" evidence="1">
    <location>
        <position position="300"/>
    </location>
    <ligand>
        <name>substrate</name>
    </ligand>
</feature>
<feature type="binding site" evidence="1">
    <location>
        <position position="336"/>
    </location>
    <ligand>
        <name>substrate</name>
    </ligand>
</feature>
<feature type="binding site" evidence="1">
    <location>
        <begin position="356"/>
        <end position="358"/>
    </location>
    <ligand>
        <name>substrate</name>
    </ligand>
</feature>
<feature type="binding site" evidence="1">
    <location>
        <begin position="397"/>
        <end position="400"/>
    </location>
    <ligand>
        <name>substrate</name>
    </ligand>
</feature>
<feature type="binding site" evidence="1">
    <location>
        <position position="436"/>
    </location>
    <ligand>
        <name>substrate</name>
    </ligand>
</feature>
<feature type="binding site" evidence="1">
    <location>
        <position position="440"/>
    </location>
    <ligand>
        <name>Zn(2+)</name>
        <dbReference type="ChEBI" id="CHEBI:29105"/>
    </ligand>
</feature>
<feature type="binding site" evidence="1">
    <location>
        <position position="463"/>
    </location>
    <ligand>
        <name>substrate</name>
    </ligand>
</feature>
<feature type="binding site" evidence="1">
    <location>
        <position position="504"/>
    </location>
    <ligand>
        <name>Zn(2+)</name>
        <dbReference type="ChEBI" id="CHEBI:29105"/>
    </ligand>
</feature>
<feature type="binding site" evidence="1">
    <location>
        <position position="584"/>
    </location>
    <ligand>
        <name>[4Fe-4S] cluster</name>
        <dbReference type="ChEBI" id="CHEBI:49883"/>
        <note>4Fe-4S-S-AdoMet</note>
    </ligand>
</feature>
<feature type="binding site" evidence="1">
    <location>
        <position position="587"/>
    </location>
    <ligand>
        <name>[4Fe-4S] cluster</name>
        <dbReference type="ChEBI" id="CHEBI:49883"/>
        <note>4Fe-4S-S-AdoMet</note>
    </ligand>
</feature>
<feature type="binding site" evidence="1">
    <location>
        <position position="592"/>
    </location>
    <ligand>
        <name>[4Fe-4S] cluster</name>
        <dbReference type="ChEBI" id="CHEBI:49883"/>
        <note>4Fe-4S-S-AdoMet</note>
    </ligand>
</feature>
<organism>
    <name type="scientific">Bordetella parapertussis (strain 12822 / ATCC BAA-587 / NCTC 13253)</name>
    <dbReference type="NCBI Taxonomy" id="257311"/>
    <lineage>
        <taxon>Bacteria</taxon>
        <taxon>Pseudomonadati</taxon>
        <taxon>Pseudomonadota</taxon>
        <taxon>Betaproteobacteria</taxon>
        <taxon>Burkholderiales</taxon>
        <taxon>Alcaligenaceae</taxon>
        <taxon>Bordetella</taxon>
    </lineage>
</organism>
<accession>Q7W1Q0</accession>
<sequence length="637" mass="70996">MNANPKFLAATAEVDAAAVAPLPKSRKVYETGSRPDIRVPFREIEQADTPTMFGGEKNPPLTVYDTSGPYTDPQASIDIRRGLPALRRAWIEERGDTEVLDGPTSDYGKERLTDPKLTAMRFDLQRPPRRARAGANVTQMHYARRGIVTPEMEFIALRENLRREHYLETLRASGPDGEKLAKRLLRQHPGQSFGAALPSAITPEFVREEVARGRAIIPANINHPEIEPMIIGRNFLVKINANIGNSAVSSGIGEEVEKMTWAIRWGGDTVMDLSTGKHIHETREWIIRNSPVPIGTVPIYQALEKVDGKAEELTWEIFRDTLIEQAEQGVDYFTIHAGVRLPFIPMTADRMTGIVSRGGSIMAKWCLAHHKESFLYERFEEICEIMKAYDVSFSLGDGLRPGSGYDANDEAQFAELKTLGELTQVAWKHDVQVMIEGPGHVPMQMIKENMELQLKHCDEAPFYTLGPLTTDIAPGYDHITSGIGAALIGWYGTAMLCYVTPKEHLGLPNKKDVKDGIITYKIAAHAADLAKGHPGAAIRDNALSKARFEFRWDDQFNLGLDPDTAKEFHDETLPKDSMKVAHFCSMCGPHFCSMKITQDVRDYAAAQGVSEKDALQQGMQEKAVEFVKKGAEVYHRT</sequence>
<protein>
    <recommendedName>
        <fullName evidence="1">Phosphomethylpyrimidine synthase</fullName>
        <ecNumber evidence="1">4.1.99.17</ecNumber>
    </recommendedName>
    <alternativeName>
        <fullName evidence="1">Hydroxymethylpyrimidine phosphate synthase</fullName>
        <shortName evidence="1">HMP-P synthase</shortName>
        <shortName evidence="1">HMP-phosphate synthase</shortName>
        <shortName evidence="1">HMPP synthase</shortName>
    </alternativeName>
    <alternativeName>
        <fullName evidence="1">Thiamine biosynthesis protein ThiC</fullName>
    </alternativeName>
</protein>
<reference key="1">
    <citation type="journal article" date="2003" name="Nat. Genet.">
        <title>Comparative analysis of the genome sequences of Bordetella pertussis, Bordetella parapertussis and Bordetella bronchiseptica.</title>
        <authorList>
            <person name="Parkhill J."/>
            <person name="Sebaihia M."/>
            <person name="Preston A."/>
            <person name="Murphy L.D."/>
            <person name="Thomson N.R."/>
            <person name="Harris D.E."/>
            <person name="Holden M.T.G."/>
            <person name="Churcher C.M."/>
            <person name="Bentley S.D."/>
            <person name="Mungall K.L."/>
            <person name="Cerdeno-Tarraga A.-M."/>
            <person name="Temple L."/>
            <person name="James K.D."/>
            <person name="Harris B."/>
            <person name="Quail M.A."/>
            <person name="Achtman M."/>
            <person name="Atkin R."/>
            <person name="Baker S."/>
            <person name="Basham D."/>
            <person name="Bason N."/>
            <person name="Cherevach I."/>
            <person name="Chillingworth T."/>
            <person name="Collins M."/>
            <person name="Cronin A."/>
            <person name="Davis P."/>
            <person name="Doggett J."/>
            <person name="Feltwell T."/>
            <person name="Goble A."/>
            <person name="Hamlin N."/>
            <person name="Hauser H."/>
            <person name="Holroyd S."/>
            <person name="Jagels K."/>
            <person name="Leather S."/>
            <person name="Moule S."/>
            <person name="Norberczak H."/>
            <person name="O'Neil S."/>
            <person name="Ormond D."/>
            <person name="Price C."/>
            <person name="Rabbinowitsch E."/>
            <person name="Rutter S."/>
            <person name="Sanders M."/>
            <person name="Saunders D."/>
            <person name="Seeger K."/>
            <person name="Sharp S."/>
            <person name="Simmonds M."/>
            <person name="Skelton J."/>
            <person name="Squares R."/>
            <person name="Squares S."/>
            <person name="Stevens K."/>
            <person name="Unwin L."/>
            <person name="Whitehead S."/>
            <person name="Barrell B.G."/>
            <person name="Maskell D.J."/>
        </authorList>
    </citation>
    <scope>NUCLEOTIDE SEQUENCE [LARGE SCALE GENOMIC DNA]</scope>
    <source>
        <strain>12822 / ATCC BAA-587 / NCTC 13253</strain>
    </source>
</reference>
<proteinExistence type="inferred from homology"/>
<dbReference type="EC" id="4.1.99.17" evidence="1"/>
<dbReference type="EMBL" id="BX640423">
    <property type="protein sequence ID" value="CAE40042.1"/>
    <property type="molecule type" value="Genomic_DNA"/>
</dbReference>
<dbReference type="RefSeq" id="WP_003807441.1">
    <property type="nucleotide sequence ID" value="NC_002928.3"/>
</dbReference>
<dbReference type="SMR" id="Q7W1Q0"/>
<dbReference type="GeneID" id="93206532"/>
<dbReference type="KEGG" id="bpa:BPP0301"/>
<dbReference type="HOGENOM" id="CLU_013181_2_1_4"/>
<dbReference type="UniPathway" id="UPA00060"/>
<dbReference type="Proteomes" id="UP000001421">
    <property type="component" value="Chromosome"/>
</dbReference>
<dbReference type="GO" id="GO:0005829">
    <property type="term" value="C:cytosol"/>
    <property type="evidence" value="ECO:0007669"/>
    <property type="project" value="TreeGrafter"/>
</dbReference>
<dbReference type="GO" id="GO:0051539">
    <property type="term" value="F:4 iron, 4 sulfur cluster binding"/>
    <property type="evidence" value="ECO:0007669"/>
    <property type="project" value="UniProtKB-KW"/>
</dbReference>
<dbReference type="GO" id="GO:0016830">
    <property type="term" value="F:carbon-carbon lyase activity"/>
    <property type="evidence" value="ECO:0007669"/>
    <property type="project" value="InterPro"/>
</dbReference>
<dbReference type="GO" id="GO:0008270">
    <property type="term" value="F:zinc ion binding"/>
    <property type="evidence" value="ECO:0007669"/>
    <property type="project" value="UniProtKB-UniRule"/>
</dbReference>
<dbReference type="GO" id="GO:0009228">
    <property type="term" value="P:thiamine biosynthetic process"/>
    <property type="evidence" value="ECO:0007669"/>
    <property type="project" value="UniProtKB-KW"/>
</dbReference>
<dbReference type="GO" id="GO:0009229">
    <property type="term" value="P:thiamine diphosphate biosynthetic process"/>
    <property type="evidence" value="ECO:0007669"/>
    <property type="project" value="UniProtKB-UniRule"/>
</dbReference>
<dbReference type="FunFam" id="3.20.20.540:FF:000001">
    <property type="entry name" value="Phosphomethylpyrimidine synthase"/>
    <property type="match status" value="1"/>
</dbReference>
<dbReference type="Gene3D" id="6.10.250.620">
    <property type="match status" value="1"/>
</dbReference>
<dbReference type="Gene3D" id="3.20.20.540">
    <property type="entry name" value="Radical SAM ThiC family, central domain"/>
    <property type="match status" value="1"/>
</dbReference>
<dbReference type="HAMAP" id="MF_00089">
    <property type="entry name" value="ThiC"/>
    <property type="match status" value="1"/>
</dbReference>
<dbReference type="InterPro" id="IPR037509">
    <property type="entry name" value="ThiC"/>
</dbReference>
<dbReference type="InterPro" id="IPR025747">
    <property type="entry name" value="ThiC-associated_dom"/>
</dbReference>
<dbReference type="InterPro" id="IPR038521">
    <property type="entry name" value="ThiC/Bza_core_dom"/>
</dbReference>
<dbReference type="InterPro" id="IPR002817">
    <property type="entry name" value="ThiC/BzaA/B"/>
</dbReference>
<dbReference type="NCBIfam" id="NF006763">
    <property type="entry name" value="PRK09284.1"/>
    <property type="match status" value="1"/>
</dbReference>
<dbReference type="NCBIfam" id="NF009895">
    <property type="entry name" value="PRK13352.1"/>
    <property type="match status" value="1"/>
</dbReference>
<dbReference type="NCBIfam" id="TIGR00190">
    <property type="entry name" value="thiC"/>
    <property type="match status" value="1"/>
</dbReference>
<dbReference type="PANTHER" id="PTHR30557:SF1">
    <property type="entry name" value="PHOSPHOMETHYLPYRIMIDINE SYNTHASE, CHLOROPLASTIC"/>
    <property type="match status" value="1"/>
</dbReference>
<dbReference type="PANTHER" id="PTHR30557">
    <property type="entry name" value="THIAMINE BIOSYNTHESIS PROTEIN THIC"/>
    <property type="match status" value="1"/>
</dbReference>
<dbReference type="Pfam" id="PF13667">
    <property type="entry name" value="ThiC-associated"/>
    <property type="match status" value="1"/>
</dbReference>
<dbReference type="Pfam" id="PF01964">
    <property type="entry name" value="ThiC_Rad_SAM"/>
    <property type="match status" value="1"/>
</dbReference>
<dbReference type="SFLD" id="SFLDF00407">
    <property type="entry name" value="phosphomethylpyrimidine_syntha"/>
    <property type="match status" value="1"/>
</dbReference>
<dbReference type="SFLD" id="SFLDG01114">
    <property type="entry name" value="phosphomethylpyrimidine_syntha"/>
    <property type="match status" value="1"/>
</dbReference>
<dbReference type="SFLD" id="SFLDS00113">
    <property type="entry name" value="Radical_SAM_Phosphomethylpyrim"/>
    <property type="match status" value="1"/>
</dbReference>
<gene>
    <name evidence="1" type="primary">thiC</name>
    <name type="ordered locus">BPP0301</name>
</gene>
<comment type="function">
    <text evidence="1">Catalyzes the synthesis of the hydroxymethylpyrimidine phosphate (HMP-P) moiety of thiamine from aminoimidazole ribotide (AIR) in a radical S-adenosyl-L-methionine (SAM)-dependent reaction.</text>
</comment>
<comment type="catalytic activity">
    <reaction evidence="1">
        <text>5-amino-1-(5-phospho-beta-D-ribosyl)imidazole + S-adenosyl-L-methionine = 4-amino-2-methyl-5-(phosphooxymethyl)pyrimidine + CO + 5'-deoxyadenosine + formate + L-methionine + 3 H(+)</text>
        <dbReference type="Rhea" id="RHEA:24840"/>
        <dbReference type="ChEBI" id="CHEBI:15378"/>
        <dbReference type="ChEBI" id="CHEBI:15740"/>
        <dbReference type="ChEBI" id="CHEBI:17245"/>
        <dbReference type="ChEBI" id="CHEBI:17319"/>
        <dbReference type="ChEBI" id="CHEBI:57844"/>
        <dbReference type="ChEBI" id="CHEBI:58354"/>
        <dbReference type="ChEBI" id="CHEBI:59789"/>
        <dbReference type="ChEBI" id="CHEBI:137981"/>
        <dbReference type="EC" id="4.1.99.17"/>
    </reaction>
</comment>
<comment type="cofactor">
    <cofactor evidence="1">
        <name>[4Fe-4S] cluster</name>
        <dbReference type="ChEBI" id="CHEBI:49883"/>
    </cofactor>
    <text evidence="1">Binds 1 [4Fe-4S] cluster per subunit. The cluster is coordinated with 3 cysteines and an exchangeable S-adenosyl-L-methionine.</text>
</comment>
<comment type="pathway">
    <text evidence="1">Cofactor biosynthesis; thiamine diphosphate biosynthesis.</text>
</comment>
<comment type="subunit">
    <text evidence="1">Homodimer.</text>
</comment>
<comment type="similarity">
    <text evidence="1">Belongs to the ThiC family.</text>
</comment>
<name>THIC_BORPA</name>